<organism>
    <name type="scientific">Lemna minor</name>
    <name type="common">Common duckweed</name>
    <dbReference type="NCBI Taxonomy" id="4472"/>
    <lineage>
        <taxon>Eukaryota</taxon>
        <taxon>Viridiplantae</taxon>
        <taxon>Streptophyta</taxon>
        <taxon>Embryophyta</taxon>
        <taxon>Tracheophyta</taxon>
        <taxon>Spermatophyta</taxon>
        <taxon>Magnoliopsida</taxon>
        <taxon>Liliopsida</taxon>
        <taxon>Araceae</taxon>
        <taxon>Lemnoideae</taxon>
        <taxon>Lemna</taxon>
    </lineage>
</organism>
<evidence type="ECO:0000255" key="1">
    <source>
        <dbReference type="HAMAP-Rule" id="MF_01396"/>
    </source>
</evidence>
<feature type="chain" id="PRO_0000362928" description="ATP synthase subunit c, chloroplastic">
    <location>
        <begin position="1"/>
        <end position="81"/>
    </location>
</feature>
<feature type="transmembrane region" description="Helical" evidence="1">
    <location>
        <begin position="3"/>
        <end position="23"/>
    </location>
</feature>
<feature type="transmembrane region" description="Helical" evidence="1">
    <location>
        <begin position="57"/>
        <end position="77"/>
    </location>
</feature>
<feature type="site" description="Reversibly protonated during proton transport" evidence="1">
    <location>
        <position position="61"/>
    </location>
</feature>
<protein>
    <recommendedName>
        <fullName evidence="1">ATP synthase subunit c, chloroplastic</fullName>
    </recommendedName>
    <alternativeName>
        <fullName evidence="1">ATP synthase F(0) sector subunit c</fullName>
    </alternativeName>
    <alternativeName>
        <fullName evidence="1">ATPase subunit III</fullName>
    </alternativeName>
    <alternativeName>
        <fullName evidence="1">F-type ATPase subunit c</fullName>
        <shortName evidence="1">F-ATPase subunit c</shortName>
    </alternativeName>
    <alternativeName>
        <fullName evidence="1">Lipid-binding protein</fullName>
    </alternativeName>
</protein>
<sequence length="81" mass="7990">MNPLISAASVIAAGLAVGLASIGPGVGQGTAAGQAVEGIARQPEAEGKIRGTLLLSLAFMEALTIYGLVVALALLFANPFV</sequence>
<dbReference type="EMBL" id="DQ400350">
    <property type="protein sequence ID" value="ABD48482.1"/>
    <property type="molecule type" value="Genomic_DNA"/>
</dbReference>
<dbReference type="RefSeq" id="YP_001595495.1">
    <property type="nucleotide sequence ID" value="NC_010109.1"/>
</dbReference>
<dbReference type="SMR" id="A9L983"/>
<dbReference type="GeneID" id="5787588"/>
<dbReference type="GO" id="GO:0009535">
    <property type="term" value="C:chloroplast thylakoid membrane"/>
    <property type="evidence" value="ECO:0007669"/>
    <property type="project" value="UniProtKB-SubCell"/>
</dbReference>
<dbReference type="GO" id="GO:0045259">
    <property type="term" value="C:proton-transporting ATP synthase complex"/>
    <property type="evidence" value="ECO:0007669"/>
    <property type="project" value="UniProtKB-KW"/>
</dbReference>
<dbReference type="GO" id="GO:0033177">
    <property type="term" value="C:proton-transporting two-sector ATPase complex, proton-transporting domain"/>
    <property type="evidence" value="ECO:0007669"/>
    <property type="project" value="InterPro"/>
</dbReference>
<dbReference type="GO" id="GO:0008289">
    <property type="term" value="F:lipid binding"/>
    <property type="evidence" value="ECO:0007669"/>
    <property type="project" value="UniProtKB-KW"/>
</dbReference>
<dbReference type="GO" id="GO:0046933">
    <property type="term" value="F:proton-transporting ATP synthase activity, rotational mechanism"/>
    <property type="evidence" value="ECO:0007669"/>
    <property type="project" value="UniProtKB-UniRule"/>
</dbReference>
<dbReference type="CDD" id="cd18183">
    <property type="entry name" value="ATP-synt_Fo_c_ATPH"/>
    <property type="match status" value="1"/>
</dbReference>
<dbReference type="FunFam" id="1.20.20.10:FF:000001">
    <property type="entry name" value="ATP synthase subunit c, chloroplastic"/>
    <property type="match status" value="1"/>
</dbReference>
<dbReference type="Gene3D" id="1.20.20.10">
    <property type="entry name" value="F1F0 ATP synthase subunit C"/>
    <property type="match status" value="1"/>
</dbReference>
<dbReference type="HAMAP" id="MF_01396">
    <property type="entry name" value="ATP_synth_c_bact"/>
    <property type="match status" value="1"/>
</dbReference>
<dbReference type="InterPro" id="IPR005953">
    <property type="entry name" value="ATP_synth_csu_bac/chlpt"/>
</dbReference>
<dbReference type="InterPro" id="IPR000454">
    <property type="entry name" value="ATP_synth_F0_csu"/>
</dbReference>
<dbReference type="InterPro" id="IPR020537">
    <property type="entry name" value="ATP_synth_F0_csu_DDCD_BS"/>
</dbReference>
<dbReference type="InterPro" id="IPR038662">
    <property type="entry name" value="ATP_synth_F0_csu_sf"/>
</dbReference>
<dbReference type="InterPro" id="IPR002379">
    <property type="entry name" value="ATPase_proteolipid_c-like_dom"/>
</dbReference>
<dbReference type="InterPro" id="IPR035921">
    <property type="entry name" value="F/V-ATP_Csub_sf"/>
</dbReference>
<dbReference type="NCBIfam" id="TIGR01260">
    <property type="entry name" value="ATP_synt_c"/>
    <property type="match status" value="1"/>
</dbReference>
<dbReference type="NCBIfam" id="NF005608">
    <property type="entry name" value="PRK07354.1"/>
    <property type="match status" value="1"/>
</dbReference>
<dbReference type="PANTHER" id="PTHR10031">
    <property type="entry name" value="ATP SYNTHASE LIPID-BINDING PROTEIN, MITOCHONDRIAL"/>
    <property type="match status" value="1"/>
</dbReference>
<dbReference type="PANTHER" id="PTHR10031:SF0">
    <property type="entry name" value="ATPASE PROTEIN 9"/>
    <property type="match status" value="1"/>
</dbReference>
<dbReference type="Pfam" id="PF00137">
    <property type="entry name" value="ATP-synt_C"/>
    <property type="match status" value="1"/>
</dbReference>
<dbReference type="PRINTS" id="PR00124">
    <property type="entry name" value="ATPASEC"/>
</dbReference>
<dbReference type="SUPFAM" id="SSF81333">
    <property type="entry name" value="F1F0 ATP synthase subunit C"/>
    <property type="match status" value="1"/>
</dbReference>
<dbReference type="PROSITE" id="PS00605">
    <property type="entry name" value="ATPASE_C"/>
    <property type="match status" value="1"/>
</dbReference>
<name>ATPH_LEMMI</name>
<geneLocation type="chloroplast"/>
<accession>A9L983</accession>
<gene>
    <name evidence="1" type="primary">atpH</name>
</gene>
<reference key="1">
    <citation type="journal article" date="2008" name="J. Mol. Evol.">
        <title>Complete sequence of the Duckweed (Lemna minor) chloroplast genome: structural organization and phylogenetic relationships to other angiosperms.</title>
        <authorList>
            <person name="Mardanov A.V."/>
            <person name="Ravin N.V."/>
            <person name="Kuznetsov B.B."/>
            <person name="Samigullin T.H."/>
            <person name="Antonov A.S."/>
            <person name="Kolganova T.V."/>
            <person name="Skyabin K.G."/>
        </authorList>
    </citation>
    <scope>NUCLEOTIDE SEQUENCE [LARGE SCALE GENOMIC DNA]</scope>
</reference>
<proteinExistence type="inferred from homology"/>
<keyword id="KW-0066">ATP synthesis</keyword>
<keyword id="KW-0138">CF(0)</keyword>
<keyword id="KW-0150">Chloroplast</keyword>
<keyword id="KW-0375">Hydrogen ion transport</keyword>
<keyword id="KW-0406">Ion transport</keyword>
<keyword id="KW-0446">Lipid-binding</keyword>
<keyword id="KW-0472">Membrane</keyword>
<keyword id="KW-0934">Plastid</keyword>
<keyword id="KW-0793">Thylakoid</keyword>
<keyword id="KW-0812">Transmembrane</keyword>
<keyword id="KW-1133">Transmembrane helix</keyword>
<keyword id="KW-0813">Transport</keyword>
<comment type="function">
    <text evidence="1">F(1)F(0) ATP synthase produces ATP from ADP in the presence of a proton or sodium gradient. F-type ATPases consist of two structural domains, F(1) containing the extramembraneous catalytic core and F(0) containing the membrane proton channel, linked together by a central stalk and a peripheral stalk. During catalysis, ATP synthesis in the catalytic domain of F(1) is coupled via a rotary mechanism of the central stalk subunits to proton translocation.</text>
</comment>
<comment type="function">
    <text evidence="1">Key component of the F(0) channel; it plays a direct role in translocation across the membrane. A homomeric c-ring of between 10-14 subunits forms the central stalk rotor element with the F(1) delta and epsilon subunits.</text>
</comment>
<comment type="subunit">
    <text evidence="1">F-type ATPases have 2 components, F(1) - the catalytic core - and F(0) - the membrane proton channel. F(1) has five subunits: alpha(3), beta(3), gamma(1), delta(1), epsilon(1). F(0) has four main subunits: a(1), b(1), b'(1) and c(10-14). The alpha and beta chains form an alternating ring which encloses part of the gamma chain. F(1) is attached to F(0) by a central stalk formed by the gamma and epsilon chains, while a peripheral stalk is formed by the delta, b and b' chains.</text>
</comment>
<comment type="subcellular location">
    <subcellularLocation>
        <location evidence="1">Plastid</location>
        <location evidence="1">Chloroplast thylakoid membrane</location>
        <topology evidence="1">Multi-pass membrane protein</topology>
    </subcellularLocation>
</comment>
<comment type="miscellaneous">
    <text>In plastids the F-type ATPase is also known as CF(1)CF(0).</text>
</comment>
<comment type="similarity">
    <text evidence="1">Belongs to the ATPase C chain family.</text>
</comment>